<comment type="function">
    <text evidence="1 2">Catalytic component of the signal peptidase complex (SPC) which catalyzes the cleavage of N-terminal signal sequences from nascent proteins as they are translocated into the lumen of the endoplasmic reticulum (By similarity). Specifically cleaves N-terminal signal peptides that contain a hydrophobic alpha-helix (h-region) shorter than 18-20 amino acids (By similarity).</text>
</comment>
<comment type="catalytic activity">
    <reaction evidence="1">
        <text>Cleavage of hydrophobic, N-terminal signal or leader sequences from secreted and periplasmic proteins.</text>
        <dbReference type="EC" id="3.4.21.89"/>
    </reaction>
</comment>
<comment type="subunit">
    <text evidence="1 2">Component of the signal peptidase complex (SPC) composed of a catalytic subunit SEC11 and three accessory subunits SPC1, SPC2 and SPC3 (By similarity). The complex induces a local thinning of the ER membrane which is used to measure the length of the signal peptide (SP) h-region of protein substrates. This ensures the selectivity of the complex towards h-regions shorter than 18-20 amino acids (By similarity). SPC associates with the translocon complex (By similarity).</text>
</comment>
<comment type="subcellular location">
    <subcellularLocation>
        <location evidence="1">Endoplasmic reticulum membrane</location>
        <topology evidence="1">Single-pass type II membrane protein</topology>
    </subcellularLocation>
</comment>
<comment type="domain">
    <text evidence="2">The C-terminal short (CTS) helix is essential for catalytic activity. It may be accommodated as a transmembrane helix in the thinned membrane environment of the complex, similarly to the signal peptide in the complex substrates.</text>
</comment>
<comment type="similarity">
    <text evidence="5">Belongs to the peptidase S26B family.</text>
</comment>
<dbReference type="EC" id="3.4.21.89" evidence="1"/>
<dbReference type="EMBL" id="GG657451">
    <property type="protein sequence ID" value="OAT07022.1"/>
    <property type="molecule type" value="Genomic_DNA"/>
</dbReference>
<dbReference type="SMR" id="C5JJG5"/>
<dbReference type="STRING" id="559298.C5JJG5"/>
<dbReference type="MEROPS" id="S26.010"/>
<dbReference type="GlyCosmos" id="C5JJG5">
    <property type="glycosylation" value="1 site, No reported glycans"/>
</dbReference>
<dbReference type="VEuPathDB" id="FungiDB:BDBG_03129"/>
<dbReference type="HOGENOM" id="CLU_089996_0_0_1"/>
<dbReference type="OrthoDB" id="10257561at2759"/>
<dbReference type="Proteomes" id="UP000002038">
    <property type="component" value="Unassembled WGS sequence"/>
</dbReference>
<dbReference type="GO" id="GO:0005787">
    <property type="term" value="C:signal peptidase complex"/>
    <property type="evidence" value="ECO:0007669"/>
    <property type="project" value="TreeGrafter"/>
</dbReference>
<dbReference type="GO" id="GO:0004252">
    <property type="term" value="F:serine-type endopeptidase activity"/>
    <property type="evidence" value="ECO:0007669"/>
    <property type="project" value="UniProtKB-EC"/>
</dbReference>
<dbReference type="GO" id="GO:0006465">
    <property type="term" value="P:signal peptide processing"/>
    <property type="evidence" value="ECO:0007669"/>
    <property type="project" value="InterPro"/>
</dbReference>
<dbReference type="CDD" id="cd06530">
    <property type="entry name" value="S26_SPase_I"/>
    <property type="match status" value="1"/>
</dbReference>
<dbReference type="InterPro" id="IPR036286">
    <property type="entry name" value="LexA/Signal_pep-like_sf"/>
</dbReference>
<dbReference type="InterPro" id="IPR019756">
    <property type="entry name" value="Pept_S26A_signal_pept_1_Ser-AS"/>
</dbReference>
<dbReference type="InterPro" id="IPR019533">
    <property type="entry name" value="Peptidase_S26"/>
</dbReference>
<dbReference type="InterPro" id="IPR001733">
    <property type="entry name" value="Peptidase_S26B"/>
</dbReference>
<dbReference type="NCBIfam" id="TIGR02228">
    <property type="entry name" value="sigpep_I_arch"/>
    <property type="match status" value="1"/>
</dbReference>
<dbReference type="PANTHER" id="PTHR10806">
    <property type="entry name" value="SIGNAL PEPTIDASE COMPLEX CATALYTIC SUBUNIT SEC11"/>
    <property type="match status" value="1"/>
</dbReference>
<dbReference type="PANTHER" id="PTHR10806:SF6">
    <property type="entry name" value="SIGNAL PEPTIDASE COMPLEX CATALYTIC SUBUNIT SEC11"/>
    <property type="match status" value="1"/>
</dbReference>
<dbReference type="PRINTS" id="PR00728">
    <property type="entry name" value="SIGNALPTASE"/>
</dbReference>
<dbReference type="SUPFAM" id="SSF51306">
    <property type="entry name" value="LexA/Signal peptidase"/>
    <property type="match status" value="1"/>
</dbReference>
<dbReference type="PROSITE" id="PS00501">
    <property type="entry name" value="SPASE_I_1"/>
    <property type="match status" value="1"/>
</dbReference>
<protein>
    <recommendedName>
        <fullName>Signal peptidase complex catalytic subunit SEC11</fullName>
        <ecNumber evidence="1">3.4.21.89</ecNumber>
    </recommendedName>
    <alternativeName>
        <fullName>Signal peptidase I</fullName>
    </alternativeName>
</protein>
<proteinExistence type="inferred from homology"/>
<keyword id="KW-0256">Endoplasmic reticulum</keyword>
<keyword id="KW-0325">Glycoprotein</keyword>
<keyword id="KW-0378">Hydrolase</keyword>
<keyword id="KW-0472">Membrane</keyword>
<keyword id="KW-0645">Protease</keyword>
<keyword id="KW-1185">Reference proteome</keyword>
<keyword id="KW-0735">Signal-anchor</keyword>
<keyword id="KW-0812">Transmembrane</keyword>
<keyword id="KW-1133">Transmembrane helix</keyword>
<gene>
    <name type="primary">SEC11</name>
    <name type="ORF">BDBG_03129</name>
</gene>
<name>SEC11_BLAGS</name>
<evidence type="ECO:0000250" key="1">
    <source>
        <dbReference type="UniProtKB" id="P15367"/>
    </source>
</evidence>
<evidence type="ECO:0000250" key="2">
    <source>
        <dbReference type="UniProtKB" id="P67812"/>
    </source>
</evidence>
<evidence type="ECO:0000255" key="3"/>
<evidence type="ECO:0000256" key="4">
    <source>
        <dbReference type="SAM" id="MobiDB-lite"/>
    </source>
</evidence>
<evidence type="ECO:0000305" key="5"/>
<sequence>MLSSLSPYMANPRQTFTQVLNFALVLSTAFMLWKGLSVYTNSASPIVVVLSGSMEPAFQRGDLLFLWNRSPRVDVGEIVVYNVRGKDIPIVHRVMRTFPDVPGKDKTKKGGKQDVEASPSSLESQKLLTKGDNNLSDDTELYARGQDYLDRKEDIVGSVRGYIPAVGYVTIMLSEHPWLKSVLLGFMGLMVILQRE</sequence>
<organism>
    <name type="scientific">Blastomyces gilchristii (strain SLH14081)</name>
    <name type="common">Blastomyces dermatitidis</name>
    <dbReference type="NCBI Taxonomy" id="559298"/>
    <lineage>
        <taxon>Eukaryota</taxon>
        <taxon>Fungi</taxon>
        <taxon>Dikarya</taxon>
        <taxon>Ascomycota</taxon>
        <taxon>Pezizomycotina</taxon>
        <taxon>Eurotiomycetes</taxon>
        <taxon>Eurotiomycetidae</taxon>
        <taxon>Onygenales</taxon>
        <taxon>Ajellomycetaceae</taxon>
        <taxon>Blastomyces</taxon>
    </lineage>
</organism>
<feature type="chain" id="PRO_0000412311" description="Signal peptidase complex catalytic subunit SEC11">
    <location>
        <begin position="1"/>
        <end position="196"/>
    </location>
</feature>
<feature type="topological domain" description="Cytoplasmic" evidence="3">
    <location>
        <begin position="1"/>
        <end position="14"/>
    </location>
</feature>
<feature type="transmembrane region" description="Helical; Signal-anchor for type II membrane protein" evidence="3">
    <location>
        <begin position="15"/>
        <end position="33"/>
    </location>
</feature>
<feature type="topological domain" description="Lumenal" evidence="3">
    <location>
        <begin position="34"/>
        <end position="196"/>
    </location>
</feature>
<feature type="region of interest" description="Disordered" evidence="4">
    <location>
        <begin position="101"/>
        <end position="133"/>
    </location>
</feature>
<feature type="region of interest" description="C-terminal short (CTS) helix" evidence="2">
    <location>
        <begin position="182"/>
        <end position="193"/>
    </location>
</feature>
<feature type="compositionally biased region" description="Polar residues" evidence="4">
    <location>
        <begin position="118"/>
        <end position="133"/>
    </location>
</feature>
<feature type="active site" description="Charge relay system" evidence="1">
    <location>
        <position position="53"/>
    </location>
</feature>
<feature type="active site" description="Charge relay system" evidence="1">
    <location>
        <position position="92"/>
    </location>
</feature>
<feature type="active site" description="Charge relay system" evidence="1">
    <location>
        <position position="138"/>
    </location>
</feature>
<feature type="glycosylation site" description="N-linked (GlcNAc...) asparagine" evidence="3">
    <location>
        <position position="134"/>
    </location>
</feature>
<reference key="1">
    <citation type="journal article" date="2015" name="PLoS Genet.">
        <title>The dynamic genome and transcriptome of the human fungal pathogen Blastomyces and close relative Emmonsia.</title>
        <authorList>
            <person name="Munoz J.F."/>
            <person name="Gauthier G.M."/>
            <person name="Desjardins C.A."/>
            <person name="Gallo J.E."/>
            <person name="Holder J."/>
            <person name="Sullivan T.D."/>
            <person name="Marty A.J."/>
            <person name="Carmen J.C."/>
            <person name="Chen Z."/>
            <person name="Ding L."/>
            <person name="Gujja S."/>
            <person name="Magrini V."/>
            <person name="Misas E."/>
            <person name="Mitreva M."/>
            <person name="Priest M."/>
            <person name="Saif S."/>
            <person name="Whiston E.A."/>
            <person name="Young S."/>
            <person name="Zeng Q."/>
            <person name="Goldman W.E."/>
            <person name="Mardis E.R."/>
            <person name="Taylor J.W."/>
            <person name="McEwen J.G."/>
            <person name="Clay O.K."/>
            <person name="Klein B.S."/>
            <person name="Cuomo C.A."/>
        </authorList>
    </citation>
    <scope>NUCLEOTIDE SEQUENCE [LARGE SCALE GENOMIC DNA]</scope>
    <source>
        <strain>SLH14081</strain>
    </source>
</reference>
<accession>C5JJG5</accession>
<accession>A0A179UKU1</accession>